<organism>
    <name type="scientific">Bacillus cereus (strain G9842)</name>
    <dbReference type="NCBI Taxonomy" id="405531"/>
    <lineage>
        <taxon>Bacteria</taxon>
        <taxon>Bacillati</taxon>
        <taxon>Bacillota</taxon>
        <taxon>Bacilli</taxon>
        <taxon>Bacillales</taxon>
        <taxon>Bacillaceae</taxon>
        <taxon>Bacillus</taxon>
        <taxon>Bacillus cereus group</taxon>
    </lineage>
</organism>
<gene>
    <name type="ordered locus">BCG9842_B0431</name>
</gene>
<sequence>MKMTSKKMKDELMKKLSRPEWDFQYDSEKEVLRIEQKDSKKGINVSLPGVVAKWEVNKEKAIEEVAYYVQEALIAMHKEENSGAKILPVIRSTSFPKQAEEGNPFIMTDHTAETRIYYALDSNKTYRLIDERLLQKLELTEQQVREMALFNARSLGYEFKQDTVAGNTFYFLNTNDGYDATRILNESLLQSMREKISGDMVVAVPHQDVLIIADIVNEIGYDIIAQMTMKFFAEGHVPITSLSFVYEDGEFEPIFILAKNRKKTDGKEKG</sequence>
<feature type="chain" id="PRO_1000199610" description="UPF0354 protein BCG9842_B0431">
    <location>
        <begin position="1"/>
        <end position="270"/>
    </location>
</feature>
<protein>
    <recommendedName>
        <fullName evidence="1">UPF0354 protein BCG9842_B0431</fullName>
    </recommendedName>
</protein>
<comment type="similarity">
    <text evidence="1">Belongs to the UPF0354 family.</text>
</comment>
<proteinExistence type="inferred from homology"/>
<accession>B7IKW0</accession>
<name>Y431_BACC2</name>
<dbReference type="EMBL" id="CP001186">
    <property type="protein sequence ID" value="ACK96334.1"/>
    <property type="molecule type" value="Genomic_DNA"/>
</dbReference>
<dbReference type="RefSeq" id="WP_000784606.1">
    <property type="nucleotide sequence ID" value="NC_011772.1"/>
</dbReference>
<dbReference type="KEGG" id="bcg:BCG9842_B0431"/>
<dbReference type="HOGENOM" id="CLU_085634_0_0_9"/>
<dbReference type="Proteomes" id="UP000006744">
    <property type="component" value="Chromosome"/>
</dbReference>
<dbReference type="HAMAP" id="MF_01548">
    <property type="entry name" value="UPF0354"/>
    <property type="match status" value="1"/>
</dbReference>
<dbReference type="InterPro" id="IPR010838">
    <property type="entry name" value="DUF1444"/>
</dbReference>
<dbReference type="NCBIfam" id="NF010189">
    <property type="entry name" value="PRK13668.1"/>
    <property type="match status" value="1"/>
</dbReference>
<dbReference type="Pfam" id="PF07285">
    <property type="entry name" value="DUF1444"/>
    <property type="match status" value="1"/>
</dbReference>
<dbReference type="PIRSF" id="PIRSF012562">
    <property type="entry name" value="UCP012562"/>
    <property type="match status" value="1"/>
</dbReference>
<reference key="1">
    <citation type="submission" date="2008-10" db="EMBL/GenBank/DDBJ databases">
        <title>Genome sequence of Bacillus cereus G9842.</title>
        <authorList>
            <person name="Dodson R.J."/>
            <person name="Durkin A.S."/>
            <person name="Rosovitz M.J."/>
            <person name="Rasko D.A."/>
            <person name="Hoffmaster A."/>
            <person name="Ravel J."/>
            <person name="Sutton G."/>
        </authorList>
    </citation>
    <scope>NUCLEOTIDE SEQUENCE [LARGE SCALE GENOMIC DNA]</scope>
    <source>
        <strain>G9842</strain>
    </source>
</reference>
<evidence type="ECO:0000255" key="1">
    <source>
        <dbReference type="HAMAP-Rule" id="MF_01548"/>
    </source>
</evidence>